<name>PA2A_PORNA</name>
<comment type="function">
    <text evidence="4">Snake venom phospholipase A2 (PLA2) that has antibacterial activity against S.aureus ATCC 25923 and ATCC 29213, acts by inducing bacterial membrane breakage. Displays a potent inhibitory effect on collagen-induced human platelet aggregation and has indirect hemolytic activity. Does not show cytotoxicity to murine skeletal muscle myoblasts. PLA2 catalyzes the calcium-dependent hydrolysis of the 2-acyl groups in 3-sn-phosphoglycerides.</text>
</comment>
<comment type="catalytic activity">
    <reaction evidence="2">
        <text>a 1,2-diacyl-sn-glycero-3-phosphocholine + H2O = a 1-acyl-sn-glycero-3-phosphocholine + a fatty acid + H(+)</text>
        <dbReference type="Rhea" id="RHEA:15801"/>
        <dbReference type="ChEBI" id="CHEBI:15377"/>
        <dbReference type="ChEBI" id="CHEBI:15378"/>
        <dbReference type="ChEBI" id="CHEBI:28868"/>
        <dbReference type="ChEBI" id="CHEBI:57643"/>
        <dbReference type="ChEBI" id="CHEBI:58168"/>
        <dbReference type="EC" id="3.1.1.4"/>
    </reaction>
</comment>
<comment type="cofactor">
    <cofactor evidence="1">
        <name>Ca(2+)</name>
        <dbReference type="ChEBI" id="CHEBI:29108"/>
    </cofactor>
    <text evidence="1">Binds 1 Ca(2+) ion.</text>
</comment>
<comment type="subcellular location">
    <subcellularLocation>
        <location evidence="4">Secreted</location>
    </subcellularLocation>
</comment>
<comment type="tissue specificity">
    <text evidence="4">Expressed by the venom gland.</text>
</comment>
<comment type="mass spectrometry"/>
<comment type="miscellaneous">
    <text evidence="4">The determined pI of this protein is: 4.6.</text>
</comment>
<comment type="similarity">
    <text evidence="3">Belongs to the phospholipase A2 family. Group II subfamily.</text>
</comment>
<sequence>DLLQFXDMMK</sequence>
<protein>
    <recommendedName>
        <fullName>Acidic phospholipase A2 PnPLA2</fullName>
        <shortName>svPLA2</shortName>
        <ecNumber evidence="2">3.1.1.4</ecNumber>
    </recommendedName>
</protein>
<reference evidence="6" key="1">
    <citation type="journal article" date="2012" name="Comp. Biochem. Physiol.">
        <title>An acidic phospholipase A(2) with antibacterial activity from Porthidium nasutum snake venom.</title>
        <authorList>
            <person name="Vargas L.J."/>
            <person name="Londono M."/>
            <person name="Quintana J.C."/>
            <person name="Rua C."/>
            <person name="Segura C."/>
            <person name="Lomonte B."/>
            <person name="Nunez V."/>
        </authorList>
    </citation>
    <scope>PROTEIN SEQUENCE</scope>
    <scope>FUNCTION</scope>
    <scope>SUBCELLULAR LOCATION</scope>
    <scope>TISSUE SPECIFICITY</scope>
    <scope>IDENTIFICATION BY MASS SPECTROMETRY</scope>
    <scope>MASS SPECTROMETRY</scope>
    <source>
        <tissue evidence="4">Venom</tissue>
    </source>
</reference>
<organism>
    <name type="scientific">Porthidium nasutum</name>
    <name type="common">Hognosed pitviper</name>
    <name type="synonym">Bothrops nasutus</name>
    <dbReference type="NCBI Taxonomy" id="74558"/>
    <lineage>
        <taxon>Eukaryota</taxon>
        <taxon>Metazoa</taxon>
        <taxon>Chordata</taxon>
        <taxon>Craniata</taxon>
        <taxon>Vertebrata</taxon>
        <taxon>Euteleostomi</taxon>
        <taxon>Lepidosauria</taxon>
        <taxon>Squamata</taxon>
        <taxon>Bifurcata</taxon>
        <taxon>Unidentata</taxon>
        <taxon>Episquamata</taxon>
        <taxon>Toxicofera</taxon>
        <taxon>Serpentes</taxon>
        <taxon>Colubroidea</taxon>
        <taxon>Viperidae</taxon>
        <taxon>Crotalinae</taxon>
        <taxon>Porthidium</taxon>
    </lineage>
</organism>
<feature type="chain" id="PRO_0000416972" description="Acidic phospholipase A2 PnPLA2">
    <location>
        <begin position="1"/>
        <end position="10" status="greater than"/>
    </location>
</feature>
<feature type="non-terminal residue" evidence="5">
    <location>
        <position position="10"/>
    </location>
</feature>
<accession>B3EWG8</accession>
<dbReference type="EC" id="3.1.1.4" evidence="2"/>
<dbReference type="GO" id="GO:0005576">
    <property type="term" value="C:extracellular region"/>
    <property type="evidence" value="ECO:0007669"/>
    <property type="project" value="UniProtKB-SubCell"/>
</dbReference>
<dbReference type="GO" id="GO:0046872">
    <property type="term" value="F:metal ion binding"/>
    <property type="evidence" value="ECO:0007669"/>
    <property type="project" value="UniProtKB-KW"/>
</dbReference>
<dbReference type="GO" id="GO:0004623">
    <property type="term" value="F:phospholipase A2 activity"/>
    <property type="evidence" value="ECO:0007669"/>
    <property type="project" value="UniProtKB-EC"/>
</dbReference>
<dbReference type="GO" id="GO:0090729">
    <property type="term" value="F:toxin activity"/>
    <property type="evidence" value="ECO:0007669"/>
    <property type="project" value="UniProtKB-KW"/>
</dbReference>
<dbReference type="GO" id="GO:0042742">
    <property type="term" value="P:defense response to bacterium"/>
    <property type="evidence" value="ECO:0007669"/>
    <property type="project" value="UniProtKB-KW"/>
</dbReference>
<dbReference type="GO" id="GO:0031640">
    <property type="term" value="P:killing of cells of another organism"/>
    <property type="evidence" value="ECO:0007669"/>
    <property type="project" value="UniProtKB-KW"/>
</dbReference>
<proteinExistence type="evidence at protein level"/>
<keyword id="KW-0044">Antibiotic</keyword>
<keyword id="KW-0929">Antimicrobial</keyword>
<keyword id="KW-0106">Calcium</keyword>
<keyword id="KW-0204">Cytolysis</keyword>
<keyword id="KW-0903">Direct protein sequencing</keyword>
<keyword id="KW-0354">Hemolysis</keyword>
<keyword id="KW-1199">Hemostasis impairing toxin</keyword>
<keyword id="KW-0378">Hydrolase</keyword>
<keyword id="KW-0479">Metal-binding</keyword>
<keyword id="KW-1201">Platelet aggregation inhibiting toxin</keyword>
<keyword id="KW-0964">Secreted</keyword>
<keyword id="KW-0800">Toxin</keyword>
<evidence type="ECO:0000250" key="1"/>
<evidence type="ECO:0000250" key="2">
    <source>
        <dbReference type="UniProtKB" id="P86389"/>
    </source>
</evidence>
<evidence type="ECO:0000255" key="3"/>
<evidence type="ECO:0000269" key="4">
    <source>
    </source>
</evidence>
<evidence type="ECO:0000303" key="5">
    <source>
    </source>
</evidence>
<evidence type="ECO:0000305" key="6"/>